<reference key="1">
    <citation type="submission" date="2006-10" db="EMBL/GenBank/DDBJ databases">
        <authorList>
            <consortium name="NIH - Zebrafish Gene Collection (ZGC) project"/>
        </authorList>
    </citation>
    <scope>NUCLEOTIDE SEQUENCE [LARGE SCALE MRNA]</scope>
    <source>
        <strain>AB</strain>
        <tissue>Embryo</tissue>
    </source>
</reference>
<feature type="chain" id="PRO_0000287184" description="CST complex subunit CTC1">
    <location>
        <begin position="1"/>
        <end position="1205"/>
    </location>
</feature>
<feature type="region of interest" description="Disordered" evidence="3">
    <location>
        <begin position="303"/>
        <end position="349"/>
    </location>
</feature>
<feature type="compositionally biased region" description="Low complexity" evidence="3">
    <location>
        <begin position="327"/>
        <end position="340"/>
    </location>
</feature>
<dbReference type="EMBL" id="BC125854">
    <property type="protein sequence ID" value="AAI25855.1"/>
    <property type="molecule type" value="mRNA"/>
</dbReference>
<dbReference type="RefSeq" id="NP_001071213.1">
    <property type="nucleotide sequence ID" value="NM_001077745.1"/>
</dbReference>
<dbReference type="SMR" id="A0JMF1"/>
<dbReference type="FunCoup" id="A0JMF1">
    <property type="interactions" value="914"/>
</dbReference>
<dbReference type="STRING" id="7955.ENSDARP00000093415"/>
<dbReference type="PaxDb" id="7955-ENSDARP00000093415"/>
<dbReference type="GeneID" id="777638"/>
<dbReference type="KEGG" id="dre:777638"/>
<dbReference type="AGR" id="ZFIN:ZDB-GENE-061103-271"/>
<dbReference type="CTD" id="80169"/>
<dbReference type="ZFIN" id="ZDB-GENE-061103-271">
    <property type="gene designation" value="ctc1"/>
</dbReference>
<dbReference type="eggNOG" id="ENOG502RBD3">
    <property type="taxonomic scope" value="Eukaryota"/>
</dbReference>
<dbReference type="InParanoid" id="A0JMF1"/>
<dbReference type="OrthoDB" id="2314520at2759"/>
<dbReference type="PhylomeDB" id="A0JMF1"/>
<dbReference type="PRO" id="PR:A0JMF1"/>
<dbReference type="Proteomes" id="UP000000437">
    <property type="component" value="Chromosome 23"/>
</dbReference>
<dbReference type="GO" id="GO:1990879">
    <property type="term" value="C:CST complex"/>
    <property type="evidence" value="ECO:0000318"/>
    <property type="project" value="GO_Central"/>
</dbReference>
<dbReference type="GO" id="GO:0003697">
    <property type="term" value="F:single-stranded DNA binding"/>
    <property type="evidence" value="ECO:0000318"/>
    <property type="project" value="GO_Central"/>
</dbReference>
<dbReference type="GO" id="GO:0042162">
    <property type="term" value="F:telomeric DNA binding"/>
    <property type="evidence" value="ECO:0000318"/>
    <property type="project" value="GO_Central"/>
</dbReference>
<dbReference type="GO" id="GO:0045740">
    <property type="term" value="P:positive regulation of DNA replication"/>
    <property type="evidence" value="ECO:0000318"/>
    <property type="project" value="GO_Central"/>
</dbReference>
<dbReference type="GO" id="GO:0010833">
    <property type="term" value="P:telomere maintenance via telomere lengthening"/>
    <property type="evidence" value="ECO:0000318"/>
    <property type="project" value="GO_Central"/>
</dbReference>
<dbReference type="InterPro" id="IPR029156">
    <property type="entry name" value="CTC1"/>
</dbReference>
<dbReference type="InterPro" id="IPR042617">
    <property type="entry name" value="CTC1-like"/>
</dbReference>
<dbReference type="PANTHER" id="PTHR14865">
    <property type="entry name" value="CST COMPLEX SUBUNIT CTC1"/>
    <property type="match status" value="1"/>
</dbReference>
<dbReference type="PANTHER" id="PTHR14865:SF2">
    <property type="entry name" value="CST COMPLEX SUBUNIT CTC1"/>
    <property type="match status" value="1"/>
</dbReference>
<dbReference type="Pfam" id="PF15489">
    <property type="entry name" value="CTC1"/>
    <property type="match status" value="1"/>
</dbReference>
<name>CTC1_DANRE</name>
<sequence>MEEFLNNFKSYSRADQRWLSAVFEAVQQQFSPLLDSDGFSVARLAQSVVEKVQRAVGSDCADLPVSYRIVSVSELIRDQRTACCSSLCWSSAHYRDQAKKAEQTLPNYKALPRDNLLLIGFLCDGRADGKSEGEWRVRDAGGSVPCMMLKSSCLWLGRLMLFPTWNYIPQNAPGAAGYLELVDPPVCVTLEAMTFDPGGALTEVMSVRHAAELLAHSCEDQVCVCVGGQVCVVGPLLLIRGKRFFCLVLSDGGSSVALIIRELKHQYWRQCVCVGQSVWISSLRVCSLGALEGRRVLTDSCQSRLHPHTPLQESSEEQDTEDDTHTPADTTHTLADATRTPADDTRLASDPAVRVKPSTIISFKGTVTKILNAEAGLYELDGQVGLCLAYQPTQKWGGGLRPGAEIQLHNVHFTYQASAFAPRAVLWACLRSSVQITAFSRLCSELQVTEPHGALQRLLLERNLGPSQYLWLCYCQKAIAERLSPRWVRPDRVCVVAGRLLDAVCDAEQKTKKKRNIYTEMIQEPHHCPISMYCVRWPSAALWSVQQLCVWMQREVWSSLSLPALLSASAPHMTALELNSALRWSSVELRLEEASPDPLLLLGVLELQAESATLQLRDHTHKLHCLCVCRDHSPNISTAWQGCLVCVRRCTLVMERFMKTNFPSWKHLDQPSYITLKHCRVYLQLCMDDLIIISPSSSMSHQMAESKLTHGHTHRSCGESSKRLRSADAGVCERADSSAVCVSLLFRLENKHGVTLQNVSADTHTRQLGFKCRAVCVGGVQRWSHDPKNCRIQERERDGGGQTVELHFRGSCVRWFPVLHPGCVYRLIALNTEDVGVLEAKGVSARGGVTQLSSPSLLLQPQWRVHTLPEEPADAQAAAPALMSVSEVLHSSSAPEVVSFHGIISQRITLQEDNEAQPKIKSVSPTADTQEDLRVRLTVQDAECPGLMVHVYLDLSCGLYTLGLITGAALQVHHVQRKVSRACNVYCRSLPISYVSVTGLRSVCSGPAAAAPPPPMMLLGSWASVGSQQCLVAQVKGHVVCVLSLRLQWICSLCGSIFTQTTCGRTHPPCDSTSAVFQAEAKVVLEDGTGEAHVWFSSESVCGLLMLNAVQWEGLQRLVRVKGHVKVYTRGRTMTCDDSPDDSIVQYLSCLCSSVSVCRQIHVTCRRRAQKTGKSQLRKVHRGQTEFICKFPPALQLQCQHIHTR</sequence>
<protein>
    <recommendedName>
        <fullName>CST complex subunit CTC1</fullName>
    </recommendedName>
    <alternativeName>
        <fullName>Conserved telomere maintenance component 1</fullName>
    </alternativeName>
</protein>
<comment type="function">
    <text evidence="1 2">Component of the CST complex proposed to act as a specialized replication factor promoting DNA replication under conditions of replication stress or natural replication barriers such as the telomere duplex. The CST complex binds single-stranded DNA with high affinity in a sequence-independent manner, while isolated subunits bind DNA with low affinity by themselves. Initially the CST complex has been proposed to protect telomeres from DNA degradation. However, the CST complex has been shown to be involved in several aspects of telomere replication (By similarity).</text>
</comment>
<comment type="subunit">
    <text evidence="1 2">Component of the CST complex.</text>
</comment>
<comment type="subcellular location">
    <subcellularLocation>
        <location evidence="1 2">Nucleus</location>
    </subcellularLocation>
    <subcellularLocation>
        <location evidence="1 2">Chromosome</location>
        <location evidence="1 2">Telomere</location>
    </subcellularLocation>
</comment>
<comment type="similarity">
    <text evidence="4">Belongs to the CTC1 family.</text>
</comment>
<accession>A0JMF1</accession>
<proteinExistence type="evidence at transcript level"/>
<gene>
    <name type="primary">ctc1</name>
    <name type="ORF">zgc:153125</name>
</gene>
<evidence type="ECO:0000250" key="1">
    <source>
        <dbReference type="UniProtKB" id="Q2NKJ3"/>
    </source>
</evidence>
<evidence type="ECO:0000250" key="2">
    <source>
        <dbReference type="UniProtKB" id="Q5SUQ9"/>
    </source>
</evidence>
<evidence type="ECO:0000256" key="3">
    <source>
        <dbReference type="SAM" id="MobiDB-lite"/>
    </source>
</evidence>
<evidence type="ECO:0000305" key="4"/>
<organism>
    <name type="scientific">Danio rerio</name>
    <name type="common">Zebrafish</name>
    <name type="synonym">Brachydanio rerio</name>
    <dbReference type="NCBI Taxonomy" id="7955"/>
    <lineage>
        <taxon>Eukaryota</taxon>
        <taxon>Metazoa</taxon>
        <taxon>Chordata</taxon>
        <taxon>Craniata</taxon>
        <taxon>Vertebrata</taxon>
        <taxon>Euteleostomi</taxon>
        <taxon>Actinopterygii</taxon>
        <taxon>Neopterygii</taxon>
        <taxon>Teleostei</taxon>
        <taxon>Ostariophysi</taxon>
        <taxon>Cypriniformes</taxon>
        <taxon>Danionidae</taxon>
        <taxon>Danioninae</taxon>
        <taxon>Danio</taxon>
    </lineage>
</organism>
<keyword id="KW-0158">Chromosome</keyword>
<keyword id="KW-0238">DNA-binding</keyword>
<keyword id="KW-0539">Nucleus</keyword>
<keyword id="KW-1185">Reference proteome</keyword>
<keyword id="KW-0779">Telomere</keyword>